<name>HPL_SOLLC</name>
<proteinExistence type="evidence at protein level"/>
<evidence type="ECO:0000250" key="1">
    <source>
        <dbReference type="UniProtKB" id="Q96242"/>
    </source>
</evidence>
<evidence type="ECO:0000255" key="2"/>
<evidence type="ECO:0000269" key="3">
    <source>
    </source>
</evidence>
<evidence type="ECO:0000269" key="4">
    <source>
    </source>
</evidence>
<evidence type="ECO:0000269" key="5">
    <source>
    </source>
</evidence>
<evidence type="ECO:0000303" key="6">
    <source>
    </source>
</evidence>
<evidence type="ECO:0000305" key="7"/>
<evidence type="ECO:0000312" key="8">
    <source>
        <dbReference type="Proteomes" id="UP000004994"/>
    </source>
</evidence>
<organism evidence="8">
    <name type="scientific">Solanum lycopersicum</name>
    <name type="common">Tomato</name>
    <name type="synonym">Lycopersicon esculentum</name>
    <dbReference type="NCBI Taxonomy" id="4081"/>
    <lineage>
        <taxon>Eukaryota</taxon>
        <taxon>Viridiplantae</taxon>
        <taxon>Streptophyta</taxon>
        <taxon>Embryophyta</taxon>
        <taxon>Tracheophyta</taxon>
        <taxon>Spermatophyta</taxon>
        <taxon>Magnoliopsida</taxon>
        <taxon>eudicotyledons</taxon>
        <taxon>Gunneridae</taxon>
        <taxon>Pentapetalae</taxon>
        <taxon>asterids</taxon>
        <taxon>lamiids</taxon>
        <taxon>Solanales</taxon>
        <taxon>Solanaceae</taxon>
        <taxon>Solanoideae</taxon>
        <taxon>Solaneae</taxon>
        <taxon>Solanum</taxon>
        <taxon>Solanum subgen. Lycopersicon</taxon>
    </lineage>
</organism>
<comment type="function">
    <text evidence="3 4">Cytochrome P450 of the CYP74B subfamily involved in the biosynthesis of traumatin and C6 aldehydes (PubMed:10859201, PubMed:10923789). Metabolizes 13- but not 9-hydroperoxides of linoleic and linolenic acids (PubMed:10859201, PubMed:10923789). Can use 15S-hydroperoxy-11(Z),13(E),17(Z)-eicosatrienoic acid (15-HPET) and 13S-hydroperoxy-9(Z),11(E),15(Z)-octadecatrienoic acid (13-HPOT) as substrates, but only 5% activity with 13S-hydroperoxy-9(Z),11(E)-octadecadienoic acid (13-HPOD) (PubMed:10859201). Produces n-hexanal and 12-oxo-9(Z)-dodecanoic acid from 13-HPOD (PubMed:10923789).</text>
</comment>
<comment type="cofactor">
    <cofactor evidence="1">
        <name>heme</name>
        <dbReference type="ChEBI" id="CHEBI:30413"/>
    </cofactor>
</comment>
<comment type="activity regulation">
    <text evidence="4">Reversibly inhibited by nordihydroguaiaretic acid (NDGA) and irreversibly by salicylic acid.</text>
</comment>
<comment type="biophysicochemical properties">
    <phDependence>
        <text evidence="4">Optimum pH is 6.0.</text>
    </phDependence>
</comment>
<comment type="subcellular location">
    <subcellularLocation>
        <location evidence="5">Plastid</location>
        <location evidence="5">Chloroplast outer membrane</location>
        <topology evidence="2">Single-pass membrane protein</topology>
        <orientation evidence="5">Intermembrane side</orientation>
    </subcellularLocation>
</comment>
<comment type="tissue specificity">
    <text evidence="3">Highly expressed in developing flowers and in young leaves. Detected in stems and immature green fruits, but not in mature green and red fruits.</text>
</comment>
<comment type="induction">
    <text evidence="3">Up-regulated by wounding.</text>
</comment>
<comment type="similarity">
    <text evidence="7">Belongs to the cytochrome P450 family.</text>
</comment>
<accession>K4CF70</accession>
<accession>Q9ARH8</accession>
<accession>Q9LLA9</accession>
<dbReference type="EC" id="4.2.99.-" evidence="7"/>
<dbReference type="EMBL" id="AF230372">
    <property type="protein sequence ID" value="AAF67142.1"/>
    <property type="molecule type" value="mRNA"/>
</dbReference>
<dbReference type="EMBL" id="AY028373">
    <property type="protein sequence ID" value="AAK27265.1"/>
    <property type="molecule type" value="mRNA"/>
</dbReference>
<dbReference type="PIR" id="JC7304">
    <property type="entry name" value="JC7304"/>
</dbReference>
<dbReference type="RefSeq" id="NP_001234420.2">
    <property type="nucleotide sequence ID" value="NM_001247491.2"/>
</dbReference>
<dbReference type="SMR" id="K4CF70"/>
<dbReference type="FunCoup" id="K4CF70">
    <property type="interactions" value="242"/>
</dbReference>
<dbReference type="STRING" id="4081.K4CF70"/>
<dbReference type="ChEMBL" id="CHEMBL4105968"/>
<dbReference type="DrugCentral" id="K4CF70"/>
<dbReference type="PaxDb" id="4081-Solyc07g049690.2.1"/>
<dbReference type="EnsemblPlants" id="Solyc07g049690.3.1">
    <property type="protein sequence ID" value="Solyc07g049690.3.1"/>
    <property type="gene ID" value="Solyc07g049690.3"/>
</dbReference>
<dbReference type="GeneID" id="543642"/>
<dbReference type="Gramene" id="Solyc07g049690.3.1">
    <property type="protein sequence ID" value="Solyc07g049690.3.1"/>
    <property type="gene ID" value="Solyc07g049690.3"/>
</dbReference>
<dbReference type="KEGG" id="sly:543642"/>
<dbReference type="eggNOG" id="ENOG502QQNS">
    <property type="taxonomic scope" value="Eukaryota"/>
</dbReference>
<dbReference type="HOGENOM" id="CLU_045757_0_0_1"/>
<dbReference type="InParanoid" id="K4CF70"/>
<dbReference type="OMA" id="QCAAKDY"/>
<dbReference type="OrthoDB" id="2789670at2759"/>
<dbReference type="PhylomeDB" id="K4CF70"/>
<dbReference type="Proteomes" id="UP000004994">
    <property type="component" value="Chromosome 7"/>
</dbReference>
<dbReference type="ExpressionAtlas" id="K4CF70">
    <property type="expression patterns" value="baseline and differential"/>
</dbReference>
<dbReference type="GO" id="GO:0009707">
    <property type="term" value="C:chloroplast outer membrane"/>
    <property type="evidence" value="ECO:0007669"/>
    <property type="project" value="UniProtKB-SubCell"/>
</dbReference>
<dbReference type="GO" id="GO:0020037">
    <property type="term" value="F:heme binding"/>
    <property type="evidence" value="ECO:0007669"/>
    <property type="project" value="InterPro"/>
</dbReference>
<dbReference type="GO" id="GO:0005506">
    <property type="term" value="F:iron ion binding"/>
    <property type="evidence" value="ECO:0007669"/>
    <property type="project" value="InterPro"/>
</dbReference>
<dbReference type="GO" id="GO:0016829">
    <property type="term" value="F:lyase activity"/>
    <property type="evidence" value="ECO:0007669"/>
    <property type="project" value="UniProtKB-KW"/>
</dbReference>
<dbReference type="GO" id="GO:0004497">
    <property type="term" value="F:monooxygenase activity"/>
    <property type="evidence" value="ECO:0000318"/>
    <property type="project" value="GO_Central"/>
</dbReference>
<dbReference type="GO" id="GO:0016705">
    <property type="term" value="F:oxidoreductase activity, acting on paired donors, with incorporation or reduction of molecular oxygen"/>
    <property type="evidence" value="ECO:0007669"/>
    <property type="project" value="InterPro"/>
</dbReference>
<dbReference type="GO" id="GO:0006952">
    <property type="term" value="P:defense response"/>
    <property type="evidence" value="ECO:0007669"/>
    <property type="project" value="UniProtKB-KW"/>
</dbReference>
<dbReference type="GO" id="GO:0006633">
    <property type="term" value="P:fatty acid biosynthetic process"/>
    <property type="evidence" value="ECO:0007669"/>
    <property type="project" value="UniProtKB-KW"/>
</dbReference>
<dbReference type="GO" id="GO:0031408">
    <property type="term" value="P:oxylipin biosynthetic process"/>
    <property type="evidence" value="ECO:0007669"/>
    <property type="project" value="UniProtKB-KW"/>
</dbReference>
<dbReference type="CDD" id="cd11071">
    <property type="entry name" value="CYP74"/>
    <property type="match status" value="1"/>
</dbReference>
<dbReference type="FunFam" id="1.10.630.10:FF:000024">
    <property type="entry name" value="Allene oxide synthase, chloroplastic"/>
    <property type="match status" value="1"/>
</dbReference>
<dbReference type="Gene3D" id="1.10.630.10">
    <property type="entry name" value="Cytochrome P450"/>
    <property type="match status" value="1"/>
</dbReference>
<dbReference type="InterPro" id="IPR001128">
    <property type="entry name" value="Cyt_P450"/>
</dbReference>
<dbReference type="InterPro" id="IPR002403">
    <property type="entry name" value="Cyt_P450_E_grp-IV"/>
</dbReference>
<dbReference type="InterPro" id="IPR036396">
    <property type="entry name" value="Cyt_P450_sf"/>
</dbReference>
<dbReference type="PANTHER" id="PTHR24286">
    <property type="entry name" value="CYTOCHROME P450 26"/>
    <property type="match status" value="1"/>
</dbReference>
<dbReference type="PANTHER" id="PTHR24286:SF49">
    <property type="entry name" value="INACTIVE LINOLENATE HYDROPEROXIDE LYASE-RELATED"/>
    <property type="match status" value="1"/>
</dbReference>
<dbReference type="Pfam" id="PF00067">
    <property type="entry name" value="p450"/>
    <property type="match status" value="1"/>
</dbReference>
<dbReference type="PRINTS" id="PR00465">
    <property type="entry name" value="EP450IV"/>
</dbReference>
<dbReference type="SUPFAM" id="SSF48264">
    <property type="entry name" value="Cytochrome P450"/>
    <property type="match status" value="1"/>
</dbReference>
<gene>
    <name evidence="6" type="primary">HPL</name>
    <name type="ordered locus">Solyc07g049690</name>
</gene>
<feature type="chain" id="PRO_0000436189" description="Fatty acid hydroperoxide lyase, chloroplastic">
    <location>
        <begin position="1"/>
        <end position="476"/>
    </location>
</feature>
<feature type="transmembrane region" description="Helical" evidence="2">
    <location>
        <begin position="280"/>
        <end position="300"/>
    </location>
</feature>
<feature type="binding site" description="axial binding residue" evidence="1">
    <location>
        <position position="438"/>
    </location>
    <ligand>
        <name>heme</name>
        <dbReference type="ChEBI" id="CHEBI:30413"/>
    </ligand>
    <ligandPart>
        <name>Fe</name>
        <dbReference type="ChEBI" id="CHEBI:18248"/>
    </ligandPart>
</feature>
<feature type="sequence conflict" description="In Ref. 2; AAF67142." evidence="7" ref="2">
    <original>P</original>
    <variation>S</variation>
    <location>
        <position position="194"/>
    </location>
</feature>
<feature type="sequence conflict" description="In Ref. 3; AAK27265." evidence="7" ref="3">
    <original>E</original>
    <variation>G</variation>
    <location>
        <position position="268"/>
    </location>
</feature>
<reference key="1">
    <citation type="journal article" date="2000" name="Biosci. Biotechnol. Biochem.">
        <title>Fatty acid hydroperoxide lyase in tomato fruits: cloning and properties of a recombinant enzyme expressed in Escherichia coli.</title>
        <authorList>
            <person name="Matsui K."/>
            <person name="Miyahara C."/>
            <person name="Wilkinson J."/>
            <person name="Hiatt B."/>
            <person name="Knauf V."/>
            <person name="Kajiwara T."/>
        </authorList>
    </citation>
    <scope>NUCLEOTIDE SEQUENCE [MRNA]</scope>
    <scope>FUNCTION</scope>
    <scope>BIOPHYSICOCHEMICAL PROPERTIES</scope>
    <scope>ACTIVITY REGULATION</scope>
</reference>
<reference key="2">
    <citation type="journal article" date="2000" name="Plant Physiol.">
        <title>Cytochrome P450-dependent metabolism of oxylipins in tomato. Cloning and expression of allene oxide synthase and fatty acid hydroperoxide lyase.</title>
        <authorList>
            <person name="Howe G.A."/>
            <person name="Lee G.I."/>
            <person name="Itoh A."/>
            <person name="Li L."/>
            <person name="DeRocher A.E."/>
        </authorList>
    </citation>
    <scope>NUCLEOTIDE SEQUENCE [MRNA]</scope>
    <scope>FUNCTION</scope>
    <scope>SUBSTRATE SPECIFICITY</scope>
    <scope>TISSUE SPECIFICITY</scope>
    <scope>INDUCTION BY WOUNDING</scope>
</reference>
<reference key="3">
    <citation type="submission" date="2001-03" db="EMBL/GenBank/DDBJ databases">
        <title>Comparative study between fatty acid hydroperoxide lyases from tomato and red bell pepper sources.</title>
        <authorList>
            <person name="Richard S."/>
            <person name="Atwal A.S."/>
        </authorList>
    </citation>
    <scope>NUCLEOTIDE SEQUENCE [MRNA]</scope>
    <source>
        <tissue>Leaf</tissue>
    </source>
</reference>
<reference key="4">
    <citation type="journal article" date="2012" name="Nature">
        <title>The tomato genome sequence provides insights into fleshy fruit evolution.</title>
        <authorList>
            <consortium name="Tomato Genome Consortium"/>
        </authorList>
    </citation>
    <scope>NUCLEOTIDE SEQUENCE [LARGE SCALE GENOMIC DNA]</scope>
    <source>
        <strain>cv. Heinz 1706</strain>
    </source>
</reference>
<reference key="5">
    <citation type="journal article" date="2001" name="Plant Physiol.">
        <title>Tomato allene oxide synthase and fatty acid hydroperoxide lyase, two cytochrome P450s involved in oxylipin metabolism, are targeted to different membranes of chloroplast envelope.</title>
        <authorList>
            <person name="Froehlich J.E."/>
            <person name="Itoh A."/>
            <person name="Howe G.A."/>
        </authorList>
    </citation>
    <scope>SUBCELLULAR LOCATION</scope>
    <scope>TOPOLOGY</scope>
</reference>
<protein>
    <recommendedName>
        <fullName evidence="6">Fatty acid hydroperoxide lyase, chloroplastic</fullName>
        <shortName evidence="6">LeHPL</shortName>
        <ecNumber evidence="7">4.2.99.-</ecNumber>
    </recommendedName>
    <alternativeName>
        <fullName evidence="7">Cytochrome P450 74B</fullName>
    </alternativeName>
</protein>
<keyword id="KW-0150">Chloroplast</keyword>
<keyword id="KW-0275">Fatty acid biosynthesis</keyword>
<keyword id="KW-0276">Fatty acid metabolism</keyword>
<keyword id="KW-0349">Heme</keyword>
<keyword id="KW-0408">Iron</keyword>
<keyword id="KW-0444">Lipid biosynthesis</keyword>
<keyword id="KW-0443">Lipid metabolism</keyword>
<keyword id="KW-0456">Lyase</keyword>
<keyword id="KW-0472">Membrane</keyword>
<keyword id="KW-0479">Metal-binding</keyword>
<keyword id="KW-0925">Oxylipin biosynthesis</keyword>
<keyword id="KW-0611">Plant defense</keyword>
<keyword id="KW-0934">Plastid</keyword>
<keyword id="KW-1002">Plastid outer membrane</keyword>
<keyword id="KW-1185">Reference proteome</keyword>
<keyword id="KW-0812">Transmembrane</keyword>
<keyword id="KW-1133">Transmembrane helix</keyword>
<sequence>MNSAPLSTPAPVTLPVRSIPGSYGLPLVGPIADRLDYFWFQKPENFFTKRMEKHKSTVFRTNVPPCFPFFGSVNPNVVAVLDVKSFSHLFDMEIVEKANVLVGDFMPSVVYTGDMRVCAYLDTSEPKHAQIKNFSQDILKRGSKTWVPTLLKELDTMFTTFEADLSKSNTASLLPALQKFLFNFFSLTILGADPSVSPEIANSGYIFLDSWLAIQLAPTVSIGVLQPLEEILVHSFAYPFFLVKGNYEKLVQFVKNEAKEVLSRAQTEFQLTEQEAIHNLLFILGFNAFGGFSIFLPTLLGNLGDEKNADMQEKLRKEVRDKVGVNPENLSFESVKEMELVQSFVYETLRLSPPVPSQYARARKDFKLSSHDSVYEIKKGELLCGYQPLVMKDPKVFDEPEKFVLERFTKEKGKELLNYLFWSNGPQTGRPTESNKQCAAKDMVTLTASLIVAYIFQKYDSVSFSSGSLTSVKKAS</sequence>